<comment type="function">
    <text evidence="1">Has endoglucanase activity on substrates containing beta-1,4 glycosidic bonds, like in carboxymethylcellulose (CMC), hydroxyethylcellulose (HEC) and beta-glucan. Involved in the degradation of complex natural cellulosic substrates (By similarity).</text>
</comment>
<comment type="catalytic activity">
    <reaction>
        <text>Endohydrolysis of (1-&gt;4)-beta-D-glucosidic linkages in cellulose, lichenin and cereal beta-D-glucans.</text>
        <dbReference type="EC" id="3.2.1.4"/>
    </reaction>
</comment>
<comment type="subcellular location">
    <subcellularLocation>
        <location evidence="1">Secreted</location>
    </subcellularLocation>
</comment>
<comment type="similarity">
    <text evidence="3">Belongs to the glycosyl hydrolase 5 (cellulase A) family.</text>
</comment>
<organism>
    <name type="scientific">Aspergillus oryzae (strain ATCC 42149 / RIB 40)</name>
    <name type="common">Yellow koji mold</name>
    <dbReference type="NCBI Taxonomy" id="510516"/>
    <lineage>
        <taxon>Eukaryota</taxon>
        <taxon>Fungi</taxon>
        <taxon>Dikarya</taxon>
        <taxon>Ascomycota</taxon>
        <taxon>Pezizomycotina</taxon>
        <taxon>Eurotiomycetes</taxon>
        <taxon>Eurotiomycetidae</taxon>
        <taxon>Eurotiales</taxon>
        <taxon>Aspergillaceae</taxon>
        <taxon>Aspergillus</taxon>
        <taxon>Aspergillus subgen. Circumdati</taxon>
    </lineage>
</organism>
<proteinExistence type="inferred from homology"/>
<protein>
    <recommendedName>
        <fullName>Probable endo-beta-1,4-glucanase B</fullName>
        <shortName>Endoglucanase B</shortName>
        <ecNumber>3.2.1.4</ecNumber>
    </recommendedName>
    <alternativeName>
        <fullName>Carboxymethylcellulase B</fullName>
    </alternativeName>
    <alternativeName>
        <fullName>Cellulase B</fullName>
    </alternativeName>
</protein>
<keyword id="KW-0119">Carbohydrate metabolism</keyword>
<keyword id="KW-0136">Cellulose degradation</keyword>
<keyword id="KW-0325">Glycoprotein</keyword>
<keyword id="KW-0326">Glycosidase</keyword>
<keyword id="KW-0378">Hydrolase</keyword>
<keyword id="KW-0624">Polysaccharide degradation</keyword>
<keyword id="KW-1185">Reference proteome</keyword>
<keyword id="KW-0964">Secreted</keyword>
<keyword id="KW-0732">Signal</keyword>
<dbReference type="EC" id="3.2.1.4"/>
<dbReference type="EMBL" id="AB195229">
    <property type="protein sequence ID" value="BAD72778.1"/>
    <property type="molecule type" value="Genomic_DNA"/>
</dbReference>
<dbReference type="EMBL" id="BA000049">
    <property type="protein sequence ID" value="BAE56461.1"/>
    <property type="molecule type" value="Genomic_DNA"/>
</dbReference>
<dbReference type="RefSeq" id="XP_001818463.1">
    <property type="nucleotide sequence ID" value="XM_001818411.1"/>
</dbReference>
<dbReference type="SMR" id="Q2UPQ4"/>
<dbReference type="STRING" id="510516.Q2UPQ4"/>
<dbReference type="CAZy" id="GH5">
    <property type="family name" value="Glycoside Hydrolase Family 5"/>
</dbReference>
<dbReference type="GlyCosmos" id="Q2UPQ4">
    <property type="glycosylation" value="2 sites, No reported glycans"/>
</dbReference>
<dbReference type="EnsemblFungi" id="BAE56461">
    <property type="protein sequence ID" value="BAE56461"/>
    <property type="gene ID" value="AO090005001553"/>
</dbReference>
<dbReference type="GeneID" id="5990408"/>
<dbReference type="KEGG" id="aor:AO090005001553"/>
<dbReference type="VEuPathDB" id="FungiDB:AO090005001553"/>
<dbReference type="HOGENOM" id="CLU_029718_0_2_1"/>
<dbReference type="OMA" id="FRMERLI"/>
<dbReference type="OrthoDB" id="45539at5052"/>
<dbReference type="Proteomes" id="UP000006564">
    <property type="component" value="Chromosome 1"/>
</dbReference>
<dbReference type="GO" id="GO:0005576">
    <property type="term" value="C:extracellular region"/>
    <property type="evidence" value="ECO:0007669"/>
    <property type="project" value="UniProtKB-SubCell"/>
</dbReference>
<dbReference type="GO" id="GO:0008810">
    <property type="term" value="F:cellulase activity"/>
    <property type="evidence" value="ECO:0007669"/>
    <property type="project" value="UniProtKB-EC"/>
</dbReference>
<dbReference type="GO" id="GO:0030245">
    <property type="term" value="P:cellulose catabolic process"/>
    <property type="evidence" value="ECO:0007669"/>
    <property type="project" value="UniProtKB-KW"/>
</dbReference>
<dbReference type="FunFam" id="3.20.20.80:FF:000078">
    <property type="entry name" value="Endo-beta-1,4-glucanase B"/>
    <property type="match status" value="1"/>
</dbReference>
<dbReference type="Gene3D" id="3.20.20.80">
    <property type="entry name" value="Glycosidases"/>
    <property type="match status" value="1"/>
</dbReference>
<dbReference type="InterPro" id="IPR001547">
    <property type="entry name" value="Glyco_hydro_5"/>
</dbReference>
<dbReference type="InterPro" id="IPR017853">
    <property type="entry name" value="Glycoside_hydrolase_SF"/>
</dbReference>
<dbReference type="PANTHER" id="PTHR34142">
    <property type="entry name" value="ENDO-BETA-1,4-GLUCANASE A"/>
    <property type="match status" value="1"/>
</dbReference>
<dbReference type="PANTHER" id="PTHR34142:SF6">
    <property type="entry name" value="ENDO-BETA-1,4-GLUCANASE B"/>
    <property type="match status" value="1"/>
</dbReference>
<dbReference type="Pfam" id="PF00150">
    <property type="entry name" value="Cellulase"/>
    <property type="match status" value="1"/>
</dbReference>
<dbReference type="SUPFAM" id="SSF51445">
    <property type="entry name" value="(Trans)glycosidases"/>
    <property type="match status" value="1"/>
</dbReference>
<evidence type="ECO:0000250" key="1"/>
<evidence type="ECO:0000255" key="2"/>
<evidence type="ECO:0000305" key="3"/>
<sequence>MKFRNLFFAAVAGSAVAAPLAKEQKKRDSVFQWIGANESGAEFGENNLPGVWGTDYIFPDVSAITTLIDKGMNIFRIQFKMERLVPDSMTGAYDEAYLQNLTTVVNAVTDAGVHAILDPHNYGRFNGEIMSTPSDFQTFWKNLAGQFQSNSLVIFDTNNEYHDMDQELVLNLNQAAIDGIREAGATEQYIFVEGNSYTGAWTWTDVNDNMKNLEDPQDKIVYQMHQYLDSDGSGTSETCVSGTIGQERVTSATQWLKDNKKVGIIGEFAGGNNDQCKTAVKGMLDYLAENTDVWKGALWWAAGPWWGDYMYSLEPPNGVAFTGMLDVLQAYLG</sequence>
<accession>Q2UPQ4</accession>
<accession>Q5TKT6</accession>
<reference key="1">
    <citation type="submission" date="2004-11" db="EMBL/GenBank/DDBJ databases">
        <title>Cloning and overexpression of a novel cellulase gene, celE, from Aspergillus oryzae KBN616.</title>
        <authorList>
            <person name="Yasuda-Yoshino S."/>
            <person name="Kitamoto N."/>
        </authorList>
    </citation>
    <scope>NUCLEOTIDE SEQUENCE [GENOMIC DNA]</scope>
    <source>
        <strain>KBN616</strain>
    </source>
</reference>
<reference key="2">
    <citation type="journal article" date="2005" name="Nature">
        <title>Genome sequencing and analysis of Aspergillus oryzae.</title>
        <authorList>
            <person name="Machida M."/>
            <person name="Asai K."/>
            <person name="Sano M."/>
            <person name="Tanaka T."/>
            <person name="Kumagai T."/>
            <person name="Terai G."/>
            <person name="Kusumoto K."/>
            <person name="Arima T."/>
            <person name="Akita O."/>
            <person name="Kashiwagi Y."/>
            <person name="Abe K."/>
            <person name="Gomi K."/>
            <person name="Horiuchi H."/>
            <person name="Kitamoto K."/>
            <person name="Kobayashi T."/>
            <person name="Takeuchi M."/>
            <person name="Denning D.W."/>
            <person name="Galagan J.E."/>
            <person name="Nierman W.C."/>
            <person name="Yu J."/>
            <person name="Archer D.B."/>
            <person name="Bennett J.W."/>
            <person name="Bhatnagar D."/>
            <person name="Cleveland T.E."/>
            <person name="Fedorova N.D."/>
            <person name="Gotoh O."/>
            <person name="Horikawa H."/>
            <person name="Hosoyama A."/>
            <person name="Ichinomiya M."/>
            <person name="Igarashi R."/>
            <person name="Iwashita K."/>
            <person name="Juvvadi P.R."/>
            <person name="Kato M."/>
            <person name="Kato Y."/>
            <person name="Kin T."/>
            <person name="Kokubun A."/>
            <person name="Maeda H."/>
            <person name="Maeyama N."/>
            <person name="Maruyama J."/>
            <person name="Nagasaki H."/>
            <person name="Nakajima T."/>
            <person name="Oda K."/>
            <person name="Okada K."/>
            <person name="Paulsen I."/>
            <person name="Sakamoto K."/>
            <person name="Sawano T."/>
            <person name="Takahashi M."/>
            <person name="Takase K."/>
            <person name="Terabayashi Y."/>
            <person name="Wortman J.R."/>
            <person name="Yamada O."/>
            <person name="Yamagata Y."/>
            <person name="Anazawa H."/>
            <person name="Hata Y."/>
            <person name="Koide Y."/>
            <person name="Komori T."/>
            <person name="Koyama Y."/>
            <person name="Minetoki T."/>
            <person name="Suharnan S."/>
            <person name="Tanaka A."/>
            <person name="Isono K."/>
            <person name="Kuhara S."/>
            <person name="Ogasawara N."/>
            <person name="Kikuchi H."/>
        </authorList>
    </citation>
    <scope>NUCLEOTIDE SEQUENCE [LARGE SCALE GENOMIC DNA]</scope>
    <source>
        <strain>ATCC 42149 / RIB 40</strain>
    </source>
</reference>
<gene>
    <name type="primary">eglB</name>
    <name type="synonym">celE</name>
    <name type="ORF">AO090005001553</name>
</gene>
<name>EGLB_ASPOR</name>
<feature type="signal peptide" evidence="2">
    <location>
        <begin position="1"/>
        <end position="17"/>
    </location>
</feature>
<feature type="chain" id="PRO_0000394057" description="Probable endo-beta-1,4-glucanase B">
    <location>
        <begin position="18"/>
        <end position="333"/>
    </location>
</feature>
<feature type="active site" description="Proton donor" evidence="1">
    <location>
        <position position="160"/>
    </location>
</feature>
<feature type="active site" description="Nucleophile" evidence="1">
    <location>
        <position position="267"/>
    </location>
</feature>
<feature type="glycosylation site" description="N-linked (GlcNAc...) asparagine" evidence="2">
    <location>
        <position position="37"/>
    </location>
</feature>
<feature type="glycosylation site" description="N-linked (GlcNAc...) asparagine" evidence="2">
    <location>
        <position position="100"/>
    </location>
</feature>
<feature type="sequence conflict" description="In Ref. 1; BAD72778." evidence="3" ref="1">
    <original>G</original>
    <variation>E</variation>
    <location>
        <position position="145"/>
    </location>
</feature>